<organism>
    <name type="scientific">Shewanella woodyi (strain ATCC 51908 / MS32)</name>
    <dbReference type="NCBI Taxonomy" id="392500"/>
    <lineage>
        <taxon>Bacteria</taxon>
        <taxon>Pseudomonadati</taxon>
        <taxon>Pseudomonadota</taxon>
        <taxon>Gammaproteobacteria</taxon>
        <taxon>Alteromonadales</taxon>
        <taxon>Shewanellaceae</taxon>
        <taxon>Shewanella</taxon>
    </lineage>
</organism>
<name>HSCA_SHEWM</name>
<keyword id="KW-0067">ATP-binding</keyword>
<keyword id="KW-0143">Chaperone</keyword>
<keyword id="KW-0547">Nucleotide-binding</keyword>
<keyword id="KW-1185">Reference proteome</keyword>
<evidence type="ECO:0000255" key="1">
    <source>
        <dbReference type="HAMAP-Rule" id="MF_00679"/>
    </source>
</evidence>
<sequence>MALLQIAEPGQSAAPHQHRLAVGIDLGTTNSLVAAVRSGVANTLPDDKSHHSLPSVVRYTQEGVEVGVDAEANSAKDPQNTIISVKRFMGRSLSDIRSGVQDLPYQLETSENGLPVFVTEQGKVNPIQVSAEILKPLVSRAEKTLGGELEGVVITVPAYFDDAQRQGTKDAAGLLGVKVLRLLNEPTAAAIAYGLDSGQEGVIAIYDLGGGTFDISILRLHKGVFEVLATGGDSALGGDDFDHLLYQHLLNQWQLASPSATLSRRLLIESRRVKEALTDNIQVTASIKLDDGTELTHDVAKATFDDLISSLVKKTVSSCRRALRDAGVTNDEVLETVMVGGSTRVPLVRELVDKFFGKEPLTSIDPDRVVAIGAAIQADILVGNKPESDLLLLDVLPLSLGIETMGGLVEKIVSRNTTIPVAKAQEFTTFKDGQTAMAFHVVQGERELVDDCRSLARFTLKGIPPLAAGAAHIRVTFQVDADGLLSVTAMEKSTGVQSSIQVKPSFGLTDEEIGTMLKDSMANAKEDITRRMLAEQKVEAARVLETLSAALQKDAVLLTESERSDIEQAMASLAQISSQDDADAIEKAIEALDASTQDFAAKRMDNSIKLALKGQSVDSI</sequence>
<protein>
    <recommendedName>
        <fullName evidence="1">Chaperone protein HscA homolog</fullName>
    </recommendedName>
</protein>
<accession>B1KNI7</accession>
<proteinExistence type="inferred from homology"/>
<comment type="function">
    <text evidence="1">Chaperone involved in the maturation of iron-sulfur cluster-containing proteins. Has a low intrinsic ATPase activity which is markedly stimulated by HscB.</text>
</comment>
<comment type="similarity">
    <text evidence="1">Belongs to the heat shock protein 70 family.</text>
</comment>
<feature type="chain" id="PRO_1000131695" description="Chaperone protein HscA homolog">
    <location>
        <begin position="1"/>
        <end position="620"/>
    </location>
</feature>
<dbReference type="EMBL" id="CP000961">
    <property type="protein sequence ID" value="ACA86064.1"/>
    <property type="molecule type" value="Genomic_DNA"/>
</dbReference>
<dbReference type="RefSeq" id="WP_012324410.1">
    <property type="nucleotide sequence ID" value="NC_010506.1"/>
</dbReference>
<dbReference type="SMR" id="B1KNI7"/>
<dbReference type="STRING" id="392500.Swoo_1780"/>
<dbReference type="KEGG" id="swd:Swoo_1780"/>
<dbReference type="eggNOG" id="COG0443">
    <property type="taxonomic scope" value="Bacteria"/>
</dbReference>
<dbReference type="HOGENOM" id="CLU_005965_2_1_6"/>
<dbReference type="Proteomes" id="UP000002168">
    <property type="component" value="Chromosome"/>
</dbReference>
<dbReference type="GO" id="GO:0005524">
    <property type="term" value="F:ATP binding"/>
    <property type="evidence" value="ECO:0007669"/>
    <property type="project" value="UniProtKB-KW"/>
</dbReference>
<dbReference type="GO" id="GO:0016887">
    <property type="term" value="F:ATP hydrolysis activity"/>
    <property type="evidence" value="ECO:0007669"/>
    <property type="project" value="UniProtKB-UniRule"/>
</dbReference>
<dbReference type="GO" id="GO:0140662">
    <property type="term" value="F:ATP-dependent protein folding chaperone"/>
    <property type="evidence" value="ECO:0007669"/>
    <property type="project" value="InterPro"/>
</dbReference>
<dbReference type="GO" id="GO:0051082">
    <property type="term" value="F:unfolded protein binding"/>
    <property type="evidence" value="ECO:0007669"/>
    <property type="project" value="InterPro"/>
</dbReference>
<dbReference type="GO" id="GO:0016226">
    <property type="term" value="P:iron-sulfur cluster assembly"/>
    <property type="evidence" value="ECO:0007669"/>
    <property type="project" value="InterPro"/>
</dbReference>
<dbReference type="FunFam" id="3.30.420.40:FF:000046">
    <property type="entry name" value="Chaperone protein HscA"/>
    <property type="match status" value="1"/>
</dbReference>
<dbReference type="FunFam" id="2.60.34.10:FF:000005">
    <property type="entry name" value="Chaperone protein HscA homolog"/>
    <property type="match status" value="1"/>
</dbReference>
<dbReference type="Gene3D" id="1.20.1270.10">
    <property type="match status" value="1"/>
</dbReference>
<dbReference type="Gene3D" id="3.30.420.40">
    <property type="match status" value="2"/>
</dbReference>
<dbReference type="Gene3D" id="3.90.640.10">
    <property type="entry name" value="Actin, Chain A, domain 4"/>
    <property type="match status" value="1"/>
</dbReference>
<dbReference type="Gene3D" id="2.60.34.10">
    <property type="entry name" value="Substrate Binding Domain Of DNAk, Chain A, domain 1"/>
    <property type="match status" value="1"/>
</dbReference>
<dbReference type="HAMAP" id="MF_00679">
    <property type="entry name" value="HscA"/>
    <property type="match status" value="1"/>
</dbReference>
<dbReference type="InterPro" id="IPR043129">
    <property type="entry name" value="ATPase_NBD"/>
</dbReference>
<dbReference type="InterPro" id="IPR018181">
    <property type="entry name" value="Heat_shock_70_CS"/>
</dbReference>
<dbReference type="InterPro" id="IPR029048">
    <property type="entry name" value="HSP70_C_sf"/>
</dbReference>
<dbReference type="InterPro" id="IPR029047">
    <property type="entry name" value="HSP70_peptide-bd_sf"/>
</dbReference>
<dbReference type="InterPro" id="IPR013126">
    <property type="entry name" value="Hsp_70_fam"/>
</dbReference>
<dbReference type="InterPro" id="IPR010236">
    <property type="entry name" value="ISC_FeS_clus_asmbl_HscA"/>
</dbReference>
<dbReference type="NCBIfam" id="TIGR01991">
    <property type="entry name" value="HscA"/>
    <property type="match status" value="1"/>
</dbReference>
<dbReference type="NCBIfam" id="NF003520">
    <property type="entry name" value="PRK05183.1"/>
    <property type="match status" value="1"/>
</dbReference>
<dbReference type="PANTHER" id="PTHR19375">
    <property type="entry name" value="HEAT SHOCK PROTEIN 70KDA"/>
    <property type="match status" value="1"/>
</dbReference>
<dbReference type="Pfam" id="PF00012">
    <property type="entry name" value="HSP70"/>
    <property type="match status" value="1"/>
</dbReference>
<dbReference type="PRINTS" id="PR00301">
    <property type="entry name" value="HEATSHOCK70"/>
</dbReference>
<dbReference type="SUPFAM" id="SSF53067">
    <property type="entry name" value="Actin-like ATPase domain"/>
    <property type="match status" value="2"/>
</dbReference>
<dbReference type="SUPFAM" id="SSF100934">
    <property type="entry name" value="Heat shock protein 70kD (HSP70), C-terminal subdomain"/>
    <property type="match status" value="1"/>
</dbReference>
<dbReference type="SUPFAM" id="SSF100920">
    <property type="entry name" value="Heat shock protein 70kD (HSP70), peptide-binding domain"/>
    <property type="match status" value="1"/>
</dbReference>
<dbReference type="PROSITE" id="PS00297">
    <property type="entry name" value="HSP70_1"/>
    <property type="match status" value="1"/>
</dbReference>
<dbReference type="PROSITE" id="PS00329">
    <property type="entry name" value="HSP70_2"/>
    <property type="match status" value="1"/>
</dbReference>
<gene>
    <name evidence="1" type="primary">hscA</name>
    <name type="ordered locus">Swoo_1780</name>
</gene>
<reference key="1">
    <citation type="submission" date="2008-02" db="EMBL/GenBank/DDBJ databases">
        <title>Complete sequence of Shewanella woodyi ATCC 51908.</title>
        <authorList>
            <consortium name="US DOE Joint Genome Institute"/>
            <person name="Copeland A."/>
            <person name="Lucas S."/>
            <person name="Lapidus A."/>
            <person name="Glavina del Rio T."/>
            <person name="Dalin E."/>
            <person name="Tice H."/>
            <person name="Bruce D."/>
            <person name="Goodwin L."/>
            <person name="Pitluck S."/>
            <person name="Sims D."/>
            <person name="Brettin T."/>
            <person name="Detter J.C."/>
            <person name="Han C."/>
            <person name="Kuske C.R."/>
            <person name="Schmutz J."/>
            <person name="Larimer F."/>
            <person name="Land M."/>
            <person name="Hauser L."/>
            <person name="Kyrpides N."/>
            <person name="Lykidis A."/>
            <person name="Zhao J.-S."/>
            <person name="Richardson P."/>
        </authorList>
    </citation>
    <scope>NUCLEOTIDE SEQUENCE [LARGE SCALE GENOMIC DNA]</scope>
    <source>
        <strain>ATCC 51908 / MS32</strain>
    </source>
</reference>